<gene>
    <name evidence="1" type="primary">wecG</name>
    <name evidence="1" type="synonym">rffM</name>
    <name type="ordered locus">SPA3769</name>
</gene>
<organism>
    <name type="scientific">Salmonella paratyphi A (strain ATCC 9150 / SARB42)</name>
    <dbReference type="NCBI Taxonomy" id="295319"/>
    <lineage>
        <taxon>Bacteria</taxon>
        <taxon>Pseudomonadati</taxon>
        <taxon>Pseudomonadota</taxon>
        <taxon>Gammaproteobacteria</taxon>
        <taxon>Enterobacterales</taxon>
        <taxon>Enterobacteriaceae</taxon>
        <taxon>Salmonella</taxon>
    </lineage>
</organism>
<dbReference type="EC" id="2.4.1.180" evidence="1"/>
<dbReference type="EMBL" id="CP000026">
    <property type="protein sequence ID" value="AAV79551.1"/>
    <property type="molecule type" value="Genomic_DNA"/>
</dbReference>
<dbReference type="RefSeq" id="WP_000183626.1">
    <property type="nucleotide sequence ID" value="NC_006511.1"/>
</dbReference>
<dbReference type="SMR" id="Q5PKK7"/>
<dbReference type="CAZy" id="GT26">
    <property type="family name" value="Glycosyltransferase Family 26"/>
</dbReference>
<dbReference type="KEGG" id="spt:SPA3769"/>
<dbReference type="HOGENOM" id="CLU_063203_3_2_6"/>
<dbReference type="UniPathway" id="UPA00566"/>
<dbReference type="Proteomes" id="UP000008185">
    <property type="component" value="Chromosome"/>
</dbReference>
<dbReference type="GO" id="GO:0047241">
    <property type="term" value="F:lipopolysaccharide N-acetylmannosaminouronosyltransferase activity"/>
    <property type="evidence" value="ECO:0007669"/>
    <property type="project" value="UniProtKB-UniRule"/>
</dbReference>
<dbReference type="GO" id="GO:0009246">
    <property type="term" value="P:enterobacterial common antigen biosynthetic process"/>
    <property type="evidence" value="ECO:0007669"/>
    <property type="project" value="UniProtKB-UniRule"/>
</dbReference>
<dbReference type="CDD" id="cd06533">
    <property type="entry name" value="Glyco_transf_WecG_TagA"/>
    <property type="match status" value="1"/>
</dbReference>
<dbReference type="HAMAP" id="MF_01001">
    <property type="entry name" value="WecG_RffM"/>
    <property type="match status" value="1"/>
</dbReference>
<dbReference type="InterPro" id="IPR023085">
    <property type="entry name" value="UDP-ManNAcA_Trfase_WecG"/>
</dbReference>
<dbReference type="InterPro" id="IPR004629">
    <property type="entry name" value="WecG_TagA_CpsF"/>
</dbReference>
<dbReference type="NCBIfam" id="NF002980">
    <property type="entry name" value="PRK03692.1"/>
    <property type="match status" value="1"/>
</dbReference>
<dbReference type="NCBIfam" id="TIGR00696">
    <property type="entry name" value="wecG_tagA_cpsF"/>
    <property type="match status" value="1"/>
</dbReference>
<dbReference type="PANTHER" id="PTHR34136">
    <property type="match status" value="1"/>
</dbReference>
<dbReference type="PANTHER" id="PTHR34136:SF1">
    <property type="entry name" value="UDP-N-ACETYL-D-MANNOSAMINURONIC ACID TRANSFERASE"/>
    <property type="match status" value="1"/>
</dbReference>
<dbReference type="Pfam" id="PF03808">
    <property type="entry name" value="Glyco_tran_WecG"/>
    <property type="match status" value="1"/>
</dbReference>
<protein>
    <recommendedName>
        <fullName evidence="1">UDP-N-acetyl-D-mannosaminuronic acid transferase</fullName>
        <shortName evidence="1">UDP-ManNAcA transferase</shortName>
        <ecNumber evidence="1">2.4.1.180</ecNumber>
    </recommendedName>
</protein>
<feature type="chain" id="PRO_0000208432" description="UDP-N-acetyl-D-mannosaminuronic acid transferase">
    <location>
        <begin position="1"/>
        <end position="246"/>
    </location>
</feature>
<accession>Q5PKK7</accession>
<sequence length="246" mass="27557">MTNNAAAPLYSLRGLPLIGWRDMSHALNYLFADGQLKQGTLVAINAEKLLTAEDNPEVRALIGAAEFKYADGISVVRSIRKKFPQAQVSRVAGADLWEALMARAGKEGTPVFLVGGKPEVLAQTEAKLRTQWNVNIVGSQDGYFTPEQRQALFARIHASGAKIVTVAMGSPKQELLMRDCREVHPHALYMGVGGTYDVFTGHVKRAPKIWQNLGLEWLYRLLSQPKRITRQMRLLRYLRWHYTGDL</sequence>
<evidence type="ECO:0000255" key="1">
    <source>
        <dbReference type="HAMAP-Rule" id="MF_01001"/>
    </source>
</evidence>
<comment type="function">
    <text evidence="1">Catalyzes the synthesis of Und-PP-GlcNAc-ManNAcA (Lipid II), the second lipid-linked intermediate involved in enterobacterial common antigen (ECA) synthesis.</text>
</comment>
<comment type="catalytic activity">
    <reaction evidence="1">
        <text>UDP-N-acetyl-alpha-D-mannosaminouronate + N-acetyl-alpha-D-glucosaminyl-di-trans,octa-cis-undecaprenyl diphosphate = beta-D-ManNAcA-(1-&gt;4)-alpha-D-GlcNAc-di-trans,octa-cis-undecaprenyl diphosphate + UDP + H(+)</text>
        <dbReference type="Rhea" id="RHEA:28366"/>
        <dbReference type="ChEBI" id="CHEBI:15378"/>
        <dbReference type="ChEBI" id="CHEBI:58223"/>
        <dbReference type="ChEBI" id="CHEBI:61495"/>
        <dbReference type="ChEBI" id="CHEBI:62959"/>
        <dbReference type="ChEBI" id="CHEBI:70731"/>
        <dbReference type="EC" id="2.4.1.180"/>
    </reaction>
</comment>
<comment type="pathway">
    <text evidence="1">Bacterial outer membrane biogenesis; enterobacterial common antigen biosynthesis.</text>
</comment>
<comment type="similarity">
    <text evidence="1">Belongs to the glycosyltransferase 26 family.</text>
</comment>
<keyword id="KW-0328">Glycosyltransferase</keyword>
<keyword id="KW-0808">Transferase</keyword>
<name>WECG_SALPA</name>
<reference key="1">
    <citation type="journal article" date="2004" name="Nat. Genet.">
        <title>Comparison of genome degradation in Paratyphi A and Typhi, human-restricted serovars of Salmonella enterica that cause typhoid.</title>
        <authorList>
            <person name="McClelland M."/>
            <person name="Sanderson K.E."/>
            <person name="Clifton S.W."/>
            <person name="Latreille P."/>
            <person name="Porwollik S."/>
            <person name="Sabo A."/>
            <person name="Meyer R."/>
            <person name="Bieri T."/>
            <person name="Ozersky P."/>
            <person name="McLellan M."/>
            <person name="Harkins C.R."/>
            <person name="Wang C."/>
            <person name="Nguyen C."/>
            <person name="Berghoff A."/>
            <person name="Elliott G."/>
            <person name="Kohlberg S."/>
            <person name="Strong C."/>
            <person name="Du F."/>
            <person name="Carter J."/>
            <person name="Kremizki C."/>
            <person name="Layman D."/>
            <person name="Leonard S."/>
            <person name="Sun H."/>
            <person name="Fulton L."/>
            <person name="Nash W."/>
            <person name="Miner T."/>
            <person name="Minx P."/>
            <person name="Delehaunty K."/>
            <person name="Fronick C."/>
            <person name="Magrini V."/>
            <person name="Nhan M."/>
            <person name="Warren W."/>
            <person name="Florea L."/>
            <person name="Spieth J."/>
            <person name="Wilson R.K."/>
        </authorList>
    </citation>
    <scope>NUCLEOTIDE SEQUENCE [LARGE SCALE GENOMIC DNA]</scope>
    <source>
        <strain>ATCC 9150 / SARB42</strain>
    </source>
</reference>
<proteinExistence type="inferred from homology"/>